<protein>
    <recommendedName>
        <fullName>Protein flp</fullName>
    </recommendedName>
    <alternativeName>
        <fullName>FmtA-like protein</fullName>
    </alternativeName>
</protein>
<dbReference type="EMBL" id="BX571856">
    <property type="protein sequence ID" value="CAG41512.1"/>
    <property type="molecule type" value="Genomic_DNA"/>
</dbReference>
<dbReference type="RefSeq" id="WP_000208581.1">
    <property type="nucleotide sequence ID" value="NC_002952.2"/>
</dbReference>
<dbReference type="SMR" id="Q6GDZ1"/>
<dbReference type="MEROPS" id="S12.011"/>
<dbReference type="KEGG" id="sar:SAR2531"/>
<dbReference type="HOGENOM" id="CLU_020027_4_2_9"/>
<dbReference type="Proteomes" id="UP000000596">
    <property type="component" value="Chromosome"/>
</dbReference>
<dbReference type="GO" id="GO:0005886">
    <property type="term" value="C:plasma membrane"/>
    <property type="evidence" value="ECO:0007669"/>
    <property type="project" value="UniProtKB-SubCell"/>
</dbReference>
<dbReference type="Gene3D" id="3.40.710.10">
    <property type="entry name" value="DD-peptidase/beta-lactamase superfamily"/>
    <property type="match status" value="1"/>
</dbReference>
<dbReference type="InterPro" id="IPR050491">
    <property type="entry name" value="Bact_CellWall_Synth/Modif"/>
</dbReference>
<dbReference type="InterPro" id="IPR001466">
    <property type="entry name" value="Beta-lactam-related"/>
</dbReference>
<dbReference type="InterPro" id="IPR012338">
    <property type="entry name" value="Beta-lactam/transpept-like"/>
</dbReference>
<dbReference type="PANTHER" id="PTHR46825">
    <property type="entry name" value="D-ALANYL-D-ALANINE-CARBOXYPEPTIDASE/ENDOPEPTIDASE AMPH"/>
    <property type="match status" value="1"/>
</dbReference>
<dbReference type="PANTHER" id="PTHR46825:SF11">
    <property type="entry name" value="PENICILLIN-BINDING PROTEIN 4"/>
    <property type="match status" value="1"/>
</dbReference>
<dbReference type="Pfam" id="PF00144">
    <property type="entry name" value="Beta-lactamase"/>
    <property type="match status" value="1"/>
</dbReference>
<dbReference type="SUPFAM" id="SSF56601">
    <property type="entry name" value="beta-lactamase/transpeptidase-like"/>
    <property type="match status" value="1"/>
</dbReference>
<feature type="chain" id="PRO_0000087307" description="Protein flp">
    <location>
        <begin position="1"/>
        <end position="499"/>
    </location>
</feature>
<feature type="transmembrane region" description="Helical" evidence="2">
    <location>
        <begin position="6"/>
        <end position="26"/>
    </location>
</feature>
<feature type="transmembrane region" description="Helical" evidence="2">
    <location>
        <begin position="389"/>
        <end position="409"/>
    </location>
</feature>
<feature type="transmembrane region" description="Helical" evidence="2">
    <location>
        <begin position="433"/>
        <end position="453"/>
    </location>
</feature>
<feature type="transmembrane region" description="Helical" evidence="2">
    <location>
        <begin position="471"/>
        <end position="491"/>
    </location>
</feature>
<gene>
    <name type="primary">flp</name>
    <name type="ordered locus">SAR2531</name>
</gene>
<accession>Q6GDZ1</accession>
<comment type="function">
    <text evidence="1">Its precise function is unknown. Has no penicillin-binding activity and is not involved in methicillin resistance (By similarity).</text>
</comment>
<comment type="subcellular location">
    <subcellularLocation>
        <location evidence="3">Cell membrane</location>
        <topology evidence="3">Multi-pass membrane protein</topology>
    </subcellularLocation>
</comment>
<comment type="miscellaneous">
    <text evidence="1">Has two of three conserved motifs typically found in penicillin-binding proteins (PBPs) and beta-lactamases, but no penicillin-binding activity has been detected.</text>
</comment>
<proteinExistence type="inferred from homology"/>
<name>FLP_STAAR</name>
<sequence>MTTKKLYFLSISIIILVAISIAIYITLNSNTKTRLTNDSQQQIDTIIEHDLQKGHIPGASILIVKNGKVFLNKGYGYQDVDKKVKASPTTKYEIASNTKAFTGLAILKLAQEGRLNLNDDVSKHVPHFKMNYNGQNETITIKQLLAQTSGIPSDITSEDSVTNKNNRLNDVTRAIMGDELHHKPGEEFEYSNMNYDLLGLIIQNVTKQSYTKYITNSWLKPLHMTHTSFKQNNNKSKHDAIGYELQGSTPVVSKPEFNLWDTPSAYMMTSTEDLEHWIKFQLNPPDKYKSLVQQSHKNLSSTIGEPNANAYASGWFTNNDEHLVFHSGTLDNFSSFILLNPKQNYGIVVLANLNSEYVPKLVEHLNTQIVNHKRYSTVASMLNQYKDQFNIVTVLMTTLILLAFIFSAYRAWQMRHGKIILRKSKLTTFLSWLTLCLCIAIALILYALPYLILGSNNWSFVLTWLPIEIKLTLTTAFIALFSMLITLLLILHTTTIKKP</sequence>
<reference key="1">
    <citation type="journal article" date="2004" name="Proc. Natl. Acad. Sci. U.S.A.">
        <title>Complete genomes of two clinical Staphylococcus aureus strains: evidence for the rapid evolution of virulence and drug resistance.</title>
        <authorList>
            <person name="Holden M.T.G."/>
            <person name="Feil E.J."/>
            <person name="Lindsay J.A."/>
            <person name="Peacock S.J."/>
            <person name="Day N.P.J."/>
            <person name="Enright M.C."/>
            <person name="Foster T.J."/>
            <person name="Moore C.E."/>
            <person name="Hurst L."/>
            <person name="Atkin R."/>
            <person name="Barron A."/>
            <person name="Bason N."/>
            <person name="Bentley S.D."/>
            <person name="Chillingworth C."/>
            <person name="Chillingworth T."/>
            <person name="Churcher C."/>
            <person name="Clark L."/>
            <person name="Corton C."/>
            <person name="Cronin A."/>
            <person name="Doggett J."/>
            <person name="Dowd L."/>
            <person name="Feltwell T."/>
            <person name="Hance Z."/>
            <person name="Harris B."/>
            <person name="Hauser H."/>
            <person name="Holroyd S."/>
            <person name="Jagels K."/>
            <person name="James K.D."/>
            <person name="Lennard N."/>
            <person name="Line A."/>
            <person name="Mayes R."/>
            <person name="Moule S."/>
            <person name="Mungall K."/>
            <person name="Ormond D."/>
            <person name="Quail M.A."/>
            <person name="Rabbinowitsch E."/>
            <person name="Rutherford K.M."/>
            <person name="Sanders M."/>
            <person name="Sharp S."/>
            <person name="Simmonds M."/>
            <person name="Stevens K."/>
            <person name="Whitehead S."/>
            <person name="Barrell B.G."/>
            <person name="Spratt B.G."/>
            <person name="Parkhill J."/>
        </authorList>
    </citation>
    <scope>NUCLEOTIDE SEQUENCE [LARGE SCALE GENOMIC DNA]</scope>
    <source>
        <strain>MRSA252</strain>
    </source>
</reference>
<organism>
    <name type="scientific">Staphylococcus aureus (strain MRSA252)</name>
    <dbReference type="NCBI Taxonomy" id="282458"/>
    <lineage>
        <taxon>Bacteria</taxon>
        <taxon>Bacillati</taxon>
        <taxon>Bacillota</taxon>
        <taxon>Bacilli</taxon>
        <taxon>Bacillales</taxon>
        <taxon>Staphylococcaceae</taxon>
        <taxon>Staphylococcus</taxon>
    </lineage>
</organism>
<evidence type="ECO:0000250" key="1"/>
<evidence type="ECO:0000255" key="2"/>
<evidence type="ECO:0000305" key="3"/>
<keyword id="KW-1003">Cell membrane</keyword>
<keyword id="KW-0472">Membrane</keyword>
<keyword id="KW-0812">Transmembrane</keyword>
<keyword id="KW-1133">Transmembrane helix</keyword>